<gene>
    <name evidence="5" type="primary">OMT13</name>
    <name evidence="4" type="synonym">OMT2</name>
</gene>
<sequence length="362" mass="39496">MGSTSAERTQMGEDEACSYAMTITSGSVPPMVLKAVIELDVLEIIKRAGPGAHLSPAEIAAQLPATNPDAATMLDRMLRLLASYSILSYSLRTLPDGRVERLYGLAPVCQFLTKNEDGVTLGALSLMNQDKVLMESWYHLKDAVLDGGIPFNKAYGMTAFEYHGTDPRFNKIFNNGMSNHSTITMKRILENYKGFEGLSTLVDVGGGTGATLNMIISKHPAIKGINFDLPHVIEDAPTYNGVEHVGGDMFVSVPKGDAIFMKWICHDWSDEHCLNFLKNCYAALPDHGKVIVCEYILPVAPETSHAARTVFHVDAIMLAHNPGGKERTEQEFEALAKGAGFEGFRVACSAYGTKVMEFLKKA</sequence>
<organism>
    <name type="scientific">Lophophora williamsii</name>
    <name type="common">Peyote</name>
    <name type="synonym">Echinocactus williamsii</name>
    <dbReference type="NCBI Taxonomy" id="130138"/>
    <lineage>
        <taxon>Eukaryota</taxon>
        <taxon>Viridiplantae</taxon>
        <taxon>Streptophyta</taxon>
        <taxon>Embryophyta</taxon>
        <taxon>Tracheophyta</taxon>
        <taxon>Spermatophyta</taxon>
        <taxon>Magnoliopsida</taxon>
        <taxon>eudicotyledons</taxon>
        <taxon>Gunneridae</taxon>
        <taxon>Pentapetalae</taxon>
        <taxon>Caryophyllales</taxon>
        <taxon>Cactineae</taxon>
        <taxon>Cactaceae</taxon>
        <taxon>Cactoideae</taxon>
        <taxon>Cacteae</taxon>
        <taxon>Lophophora</taxon>
    </lineage>
</organism>
<evidence type="ECO:0000250" key="1">
    <source>
        <dbReference type="UniProtKB" id="A0A166U5H3"/>
    </source>
</evidence>
<evidence type="ECO:0000255" key="2">
    <source>
        <dbReference type="PROSITE-ProRule" id="PRU01020"/>
    </source>
</evidence>
<evidence type="ECO:0000269" key="3">
    <source>
    </source>
</evidence>
<evidence type="ECO:0000303" key="4">
    <source>
    </source>
</evidence>
<evidence type="ECO:0000303" key="5">
    <source>
    </source>
</evidence>
<evidence type="ECO:0000305" key="6"/>
<evidence type="ECO:0000312" key="7">
    <source>
        <dbReference type="EMBL" id="WMX25280.1"/>
    </source>
</evidence>
<accession>A0AA51VKJ3</accession>
<reference evidence="7" key="1">
    <citation type="journal article" date="2023" name="Plant J.">
        <title>Elucidation of the mescaline biosynthetic pathway in peyote (Lophophora williamsii).</title>
        <authorList>
            <person name="Watkins J.L."/>
            <person name="Li Q."/>
            <person name="Yeaman S."/>
            <person name="Facchini P.J."/>
        </authorList>
    </citation>
    <scope>NUCLEOTIDE SEQUENCE [MRNA]</scope>
    <scope>FUNCTION</scope>
    <scope>CATALYTIC ACTIVITY</scope>
    <scope>TISSUE SPECIFICITY</scope>
    <scope>PATHWAY</scope>
    <scope>BIOPHYSICOCHEMICAL PROPERTIES</scope>
    <source>
        <strain>cv. Jourdaniana</strain>
    </source>
</reference>
<reference key="2">
    <citation type="journal article" date="2024" name="Mol. Plant">
        <title>The biosynthetic pathway of the hallucinogen mescaline and its heterologous reconstruction.</title>
        <authorList>
            <person name="Berman P."/>
            <person name="de Haro L.A."/>
            <person name="Cavaco A.-R."/>
            <person name="Panda S."/>
            <person name="Dong Y."/>
            <person name="Kuzmich N."/>
            <person name="Lichtenstein G."/>
            <person name="Peleg Y."/>
            <person name="Harat H."/>
            <person name="Jozwiak A."/>
            <person name="Cai J."/>
            <person name="Heinig U."/>
            <person name="Meir S."/>
            <person name="Rogachev I."/>
            <person name="Aharoni A."/>
        </authorList>
    </citation>
    <scope>NUCLEOTIDE SEQUENCE [MRNA] OF 11-362</scope>
    <source>
        <strain>cv. Rehovot 7</strain>
    </source>
</reference>
<name>OMT13_LOPWI</name>
<protein>
    <recommendedName>
        <fullName evidence="5">O-methyltransferase 13</fullName>
        <shortName evidence="5">LwOMT13</shortName>
        <ecNumber evidence="2">2.1.1.-</ecNumber>
    </recommendedName>
    <alternativeName>
        <fullName evidence="4">O-methyltransferase 2</fullName>
        <shortName evidence="4">LwOMT2</shortName>
    </alternativeName>
</protein>
<comment type="function">
    <text evidence="3">O-methyltransferase participating in the biosynthesis of natural products derived from phenylethylamine, including mescaline, a natural hallucinogen potentially used in psychotherapeutic treatments (PubMed:37675639). Catalyzes the O-methylation of dopamine and 4,5-dihydroxy-3-methoxyphenethylamine (PubMed:37675639).</text>
</comment>
<comment type="catalytic activity">
    <reaction evidence="3">
        <text>dopamine + S-adenosyl-L-methionine = 3-methoxytyramine + S-adenosyl-L-homocysteine + H(+)</text>
        <dbReference type="Rhea" id="RHEA:72255"/>
        <dbReference type="ChEBI" id="CHEBI:15378"/>
        <dbReference type="ChEBI" id="CHEBI:57856"/>
        <dbReference type="ChEBI" id="CHEBI:59789"/>
        <dbReference type="ChEBI" id="CHEBI:59905"/>
        <dbReference type="ChEBI" id="CHEBI:192089"/>
    </reaction>
    <physiologicalReaction direction="left-to-right" evidence="3">
        <dbReference type="Rhea" id="RHEA:72256"/>
    </physiologicalReaction>
</comment>
<comment type="biophysicochemical properties">
    <kinetics>
        <KM evidence="3">99.5 uM for 3-methoxy-4,5-dihydroxyphenethylamine</KM>
        <KM evidence="3">0.7 uM for S-adenosyl-L-methionine</KM>
        <Vmax evidence="3">287.0 nmol/min/mg enzyme with 3-methoxy-4,5-dihydroxyphenethylamine as substrate</Vmax>
        <Vmax evidence="3">85.0 nmol/min/mg enzyme with S-adenosyl-L-methionine as substrate</Vmax>
        <text evidence="3">kcat is 0.189 sec(-1) with 3-methoxy-4,5-dihydroxyphenethylamine as substrate (PubMed:37675639). kcat is 0.056 sec(-1) with S-adenosyl-L-methionine as substrate (PubMed:37675639).</text>
    </kinetics>
    <phDependence>
        <text evidence="3">Optimum pH is 8.</text>
    </phDependence>
    <temperatureDependence>
        <text evidence="3">Optimum temperature is 30-50 degrees Celsius.</text>
    </temperatureDependence>
</comment>
<comment type="pathway">
    <text evidence="3">Aromatic compound metabolism.</text>
</comment>
<comment type="pathway">
    <text evidence="3">Alkaloid biosynthesis.</text>
</comment>
<comment type="subunit">
    <text evidence="1">Homodimer.</text>
</comment>
<comment type="tissue specificity">
    <text evidence="3">Mainly expressed in vascular and cortical tissues.</text>
</comment>
<comment type="similarity">
    <text evidence="2">Belongs to the class I-like SAM-binding methyltransferase superfamily. Cation-independent O-methyltransferase family.</text>
</comment>
<keyword id="KW-0017">Alkaloid metabolism</keyword>
<keyword id="KW-0489">Methyltransferase</keyword>
<keyword id="KW-0949">S-adenosyl-L-methionine</keyword>
<keyword id="KW-0808">Transferase</keyword>
<feature type="chain" id="PRO_0000462560" description="O-methyltransferase 13">
    <location>
        <begin position="1"/>
        <end position="362"/>
    </location>
</feature>
<feature type="active site" description="Proton acceptor" evidence="2">
    <location>
        <position position="266"/>
    </location>
</feature>
<feature type="binding site" evidence="1">
    <location>
        <position position="181"/>
    </location>
    <ligand>
        <name>S-adenosyl-L-homocysteine</name>
        <dbReference type="ChEBI" id="CHEBI:57856"/>
    </ligand>
</feature>
<feature type="binding site" evidence="1">
    <location>
        <position position="205"/>
    </location>
    <ligand>
        <name>S-adenosyl-L-homocysteine</name>
        <dbReference type="ChEBI" id="CHEBI:57856"/>
    </ligand>
</feature>
<feature type="binding site" evidence="1">
    <location>
        <position position="228"/>
    </location>
    <ligand>
        <name>S-adenosyl-L-homocysteine</name>
        <dbReference type="ChEBI" id="CHEBI:57856"/>
    </ligand>
</feature>
<feature type="binding site" evidence="2">
    <location>
        <position position="228"/>
    </location>
    <ligand>
        <name>S-adenosyl-L-methionine</name>
        <dbReference type="ChEBI" id="CHEBI:59789"/>
    </ligand>
</feature>
<feature type="binding site" evidence="1">
    <location>
        <position position="248"/>
    </location>
    <ligand>
        <name>S-adenosyl-L-homocysteine</name>
        <dbReference type="ChEBI" id="CHEBI:57856"/>
    </ligand>
</feature>
<feature type="binding site" evidence="1">
    <location>
        <position position="262"/>
    </location>
    <ligand>
        <name>S-adenosyl-L-homocysteine</name>
        <dbReference type="ChEBI" id="CHEBI:57856"/>
    </ligand>
</feature>
<feature type="sequence conflict" description="In Ref. 1; WMX25280." evidence="6" ref="1">
    <original>Y</original>
    <variation>C</variation>
    <location>
        <position position="281"/>
    </location>
</feature>
<dbReference type="EC" id="2.1.1.-" evidence="2"/>
<dbReference type="EMBL" id="OQ831037">
    <property type="protein sequence ID" value="WMX25280.1"/>
    <property type="molecule type" value="mRNA"/>
</dbReference>
<dbReference type="GO" id="GO:0008171">
    <property type="term" value="F:O-methyltransferase activity"/>
    <property type="evidence" value="ECO:0007669"/>
    <property type="project" value="InterPro"/>
</dbReference>
<dbReference type="GO" id="GO:0046983">
    <property type="term" value="F:protein dimerization activity"/>
    <property type="evidence" value="ECO:0007669"/>
    <property type="project" value="InterPro"/>
</dbReference>
<dbReference type="GO" id="GO:0032259">
    <property type="term" value="P:methylation"/>
    <property type="evidence" value="ECO:0007669"/>
    <property type="project" value="UniProtKB-KW"/>
</dbReference>
<dbReference type="CDD" id="cd02440">
    <property type="entry name" value="AdoMet_MTases"/>
    <property type="match status" value="1"/>
</dbReference>
<dbReference type="FunFam" id="1.10.10.10:FF:000357">
    <property type="entry name" value="Caffeic acid 3-O-methyltransferase"/>
    <property type="match status" value="1"/>
</dbReference>
<dbReference type="FunFam" id="3.40.50.150:FF:000061">
    <property type="entry name" value="Caffeic acid O-methyltransferase"/>
    <property type="match status" value="1"/>
</dbReference>
<dbReference type="Gene3D" id="3.40.50.150">
    <property type="entry name" value="Vaccinia Virus protein VP39"/>
    <property type="match status" value="1"/>
</dbReference>
<dbReference type="Gene3D" id="1.10.10.10">
    <property type="entry name" value="Winged helix-like DNA-binding domain superfamily/Winged helix DNA-binding domain"/>
    <property type="match status" value="1"/>
</dbReference>
<dbReference type="InterPro" id="IPR016461">
    <property type="entry name" value="COMT-like"/>
</dbReference>
<dbReference type="InterPro" id="IPR001077">
    <property type="entry name" value="O_MeTrfase_dom"/>
</dbReference>
<dbReference type="InterPro" id="IPR012967">
    <property type="entry name" value="Plant_O-MeTrfase_dimerisation"/>
</dbReference>
<dbReference type="InterPro" id="IPR029063">
    <property type="entry name" value="SAM-dependent_MTases_sf"/>
</dbReference>
<dbReference type="InterPro" id="IPR036388">
    <property type="entry name" value="WH-like_DNA-bd_sf"/>
</dbReference>
<dbReference type="InterPro" id="IPR036390">
    <property type="entry name" value="WH_DNA-bd_sf"/>
</dbReference>
<dbReference type="PANTHER" id="PTHR11746">
    <property type="entry name" value="O-METHYLTRANSFERASE"/>
    <property type="match status" value="1"/>
</dbReference>
<dbReference type="Pfam" id="PF08100">
    <property type="entry name" value="Dimerisation"/>
    <property type="match status" value="1"/>
</dbReference>
<dbReference type="Pfam" id="PF00891">
    <property type="entry name" value="Methyltransf_2"/>
    <property type="match status" value="1"/>
</dbReference>
<dbReference type="PIRSF" id="PIRSF005739">
    <property type="entry name" value="O-mtase"/>
    <property type="match status" value="1"/>
</dbReference>
<dbReference type="SUPFAM" id="SSF53335">
    <property type="entry name" value="S-adenosyl-L-methionine-dependent methyltransferases"/>
    <property type="match status" value="1"/>
</dbReference>
<dbReference type="SUPFAM" id="SSF46785">
    <property type="entry name" value="Winged helix' DNA-binding domain"/>
    <property type="match status" value="1"/>
</dbReference>
<dbReference type="PROSITE" id="PS51683">
    <property type="entry name" value="SAM_OMT_II"/>
    <property type="match status" value="1"/>
</dbReference>
<proteinExistence type="evidence at protein level"/>